<dbReference type="EMBL" id="BX640435">
    <property type="protein sequence ID" value="CAE39415.1"/>
    <property type="molecule type" value="Genomic_DNA"/>
</dbReference>
<dbReference type="RefSeq" id="WP_010929407.1">
    <property type="nucleotide sequence ID" value="NC_002928.3"/>
</dbReference>
<dbReference type="SMR" id="Q7W3A9"/>
<dbReference type="GeneID" id="93205932"/>
<dbReference type="KEGG" id="bpa:BPP4136"/>
<dbReference type="HOGENOM" id="CLU_050669_0_1_4"/>
<dbReference type="Proteomes" id="UP000001421">
    <property type="component" value="Chromosome"/>
</dbReference>
<dbReference type="GO" id="GO:0005886">
    <property type="term" value="C:plasma membrane"/>
    <property type="evidence" value="ECO:0007669"/>
    <property type="project" value="UniProtKB-SubCell"/>
</dbReference>
<dbReference type="GO" id="GO:0045259">
    <property type="term" value="C:proton-transporting ATP synthase complex"/>
    <property type="evidence" value="ECO:0007669"/>
    <property type="project" value="UniProtKB-KW"/>
</dbReference>
<dbReference type="GO" id="GO:0005524">
    <property type="term" value="F:ATP binding"/>
    <property type="evidence" value="ECO:0007669"/>
    <property type="project" value="UniProtKB-UniRule"/>
</dbReference>
<dbReference type="GO" id="GO:0046933">
    <property type="term" value="F:proton-transporting ATP synthase activity, rotational mechanism"/>
    <property type="evidence" value="ECO:0007669"/>
    <property type="project" value="UniProtKB-UniRule"/>
</dbReference>
<dbReference type="GO" id="GO:0042777">
    <property type="term" value="P:proton motive force-driven plasma membrane ATP synthesis"/>
    <property type="evidence" value="ECO:0007669"/>
    <property type="project" value="UniProtKB-UniRule"/>
</dbReference>
<dbReference type="CDD" id="cd12151">
    <property type="entry name" value="F1-ATPase_gamma"/>
    <property type="match status" value="1"/>
</dbReference>
<dbReference type="FunFam" id="1.10.287.80:FF:000005">
    <property type="entry name" value="ATP synthase gamma chain"/>
    <property type="match status" value="1"/>
</dbReference>
<dbReference type="Gene3D" id="3.40.1380.10">
    <property type="match status" value="1"/>
</dbReference>
<dbReference type="Gene3D" id="1.10.287.80">
    <property type="entry name" value="ATP synthase, gamma subunit, helix hairpin domain"/>
    <property type="match status" value="2"/>
</dbReference>
<dbReference type="HAMAP" id="MF_00815">
    <property type="entry name" value="ATP_synth_gamma_bact"/>
    <property type="match status" value="1"/>
</dbReference>
<dbReference type="InterPro" id="IPR035968">
    <property type="entry name" value="ATP_synth_F1_ATPase_gsu"/>
</dbReference>
<dbReference type="InterPro" id="IPR000131">
    <property type="entry name" value="ATP_synth_F1_gsu"/>
</dbReference>
<dbReference type="InterPro" id="IPR023632">
    <property type="entry name" value="ATP_synth_F1_gsu_CS"/>
</dbReference>
<dbReference type="NCBIfam" id="TIGR01146">
    <property type="entry name" value="ATPsyn_F1gamma"/>
    <property type="match status" value="1"/>
</dbReference>
<dbReference type="NCBIfam" id="NF004144">
    <property type="entry name" value="PRK05621.1-1"/>
    <property type="match status" value="1"/>
</dbReference>
<dbReference type="PANTHER" id="PTHR11693">
    <property type="entry name" value="ATP SYNTHASE GAMMA CHAIN"/>
    <property type="match status" value="1"/>
</dbReference>
<dbReference type="PANTHER" id="PTHR11693:SF22">
    <property type="entry name" value="ATP SYNTHASE SUBUNIT GAMMA, MITOCHONDRIAL"/>
    <property type="match status" value="1"/>
</dbReference>
<dbReference type="Pfam" id="PF00231">
    <property type="entry name" value="ATP-synt"/>
    <property type="match status" value="1"/>
</dbReference>
<dbReference type="PRINTS" id="PR00126">
    <property type="entry name" value="ATPASEGAMMA"/>
</dbReference>
<dbReference type="SUPFAM" id="SSF52943">
    <property type="entry name" value="ATP synthase (F1-ATPase), gamma subunit"/>
    <property type="match status" value="1"/>
</dbReference>
<dbReference type="PROSITE" id="PS00153">
    <property type="entry name" value="ATPASE_GAMMA"/>
    <property type="match status" value="1"/>
</dbReference>
<comment type="function">
    <text evidence="1">Produces ATP from ADP in the presence of a proton gradient across the membrane. The gamma chain is believed to be important in regulating ATPase activity and the flow of protons through the CF(0) complex.</text>
</comment>
<comment type="subunit">
    <text evidence="1">F-type ATPases have 2 components, CF(1) - the catalytic core - and CF(0) - the membrane proton channel. CF(1) has five subunits: alpha(3), beta(3), gamma(1), delta(1), epsilon(1). CF(0) has three main subunits: a, b and c.</text>
</comment>
<comment type="subcellular location">
    <subcellularLocation>
        <location evidence="1">Cell inner membrane</location>
        <topology evidence="1">Peripheral membrane protein</topology>
    </subcellularLocation>
</comment>
<comment type="similarity">
    <text evidence="1">Belongs to the ATPase gamma chain family.</text>
</comment>
<reference key="1">
    <citation type="journal article" date="2003" name="Nat. Genet.">
        <title>Comparative analysis of the genome sequences of Bordetella pertussis, Bordetella parapertussis and Bordetella bronchiseptica.</title>
        <authorList>
            <person name="Parkhill J."/>
            <person name="Sebaihia M."/>
            <person name="Preston A."/>
            <person name="Murphy L.D."/>
            <person name="Thomson N.R."/>
            <person name="Harris D.E."/>
            <person name="Holden M.T.G."/>
            <person name="Churcher C.M."/>
            <person name="Bentley S.D."/>
            <person name="Mungall K.L."/>
            <person name="Cerdeno-Tarraga A.-M."/>
            <person name="Temple L."/>
            <person name="James K.D."/>
            <person name="Harris B."/>
            <person name="Quail M.A."/>
            <person name="Achtman M."/>
            <person name="Atkin R."/>
            <person name="Baker S."/>
            <person name="Basham D."/>
            <person name="Bason N."/>
            <person name="Cherevach I."/>
            <person name="Chillingworth T."/>
            <person name="Collins M."/>
            <person name="Cronin A."/>
            <person name="Davis P."/>
            <person name="Doggett J."/>
            <person name="Feltwell T."/>
            <person name="Goble A."/>
            <person name="Hamlin N."/>
            <person name="Hauser H."/>
            <person name="Holroyd S."/>
            <person name="Jagels K."/>
            <person name="Leather S."/>
            <person name="Moule S."/>
            <person name="Norberczak H."/>
            <person name="O'Neil S."/>
            <person name="Ormond D."/>
            <person name="Price C."/>
            <person name="Rabbinowitsch E."/>
            <person name="Rutter S."/>
            <person name="Sanders M."/>
            <person name="Saunders D."/>
            <person name="Seeger K."/>
            <person name="Sharp S."/>
            <person name="Simmonds M."/>
            <person name="Skelton J."/>
            <person name="Squares R."/>
            <person name="Squares S."/>
            <person name="Stevens K."/>
            <person name="Unwin L."/>
            <person name="Whitehead S."/>
            <person name="Barrell B.G."/>
            <person name="Maskell D.J."/>
        </authorList>
    </citation>
    <scope>NUCLEOTIDE SEQUENCE [LARGE SCALE GENOMIC DNA]</scope>
    <source>
        <strain>12822 / ATCC BAA-587 / NCTC 13253</strain>
    </source>
</reference>
<organism>
    <name type="scientific">Bordetella parapertussis (strain 12822 / ATCC BAA-587 / NCTC 13253)</name>
    <dbReference type="NCBI Taxonomy" id="257311"/>
    <lineage>
        <taxon>Bacteria</taxon>
        <taxon>Pseudomonadati</taxon>
        <taxon>Pseudomonadota</taxon>
        <taxon>Betaproteobacteria</taxon>
        <taxon>Burkholderiales</taxon>
        <taxon>Alcaligenaceae</taxon>
        <taxon>Bordetella</taxon>
    </lineage>
</organism>
<keyword id="KW-0066">ATP synthesis</keyword>
<keyword id="KW-0997">Cell inner membrane</keyword>
<keyword id="KW-1003">Cell membrane</keyword>
<keyword id="KW-0139">CF(1)</keyword>
<keyword id="KW-0375">Hydrogen ion transport</keyword>
<keyword id="KW-0406">Ion transport</keyword>
<keyword id="KW-0472">Membrane</keyword>
<keyword id="KW-0813">Transport</keyword>
<evidence type="ECO:0000255" key="1">
    <source>
        <dbReference type="HAMAP-Rule" id="MF_00815"/>
    </source>
</evidence>
<gene>
    <name evidence="1" type="primary">atpG</name>
    <name type="ordered locus">BPP4136</name>
</gene>
<protein>
    <recommendedName>
        <fullName evidence="1">ATP synthase gamma chain</fullName>
    </recommendedName>
    <alternativeName>
        <fullName evidence="1">ATP synthase F1 sector gamma subunit</fullName>
    </alternativeName>
    <alternativeName>
        <fullName evidence="1">F-ATPase gamma subunit</fullName>
    </alternativeName>
</protein>
<accession>Q7W3A9</accession>
<sequence length="301" mass="33310">MPGIKEIRTKIKSVQNTRKITKAMEMVAASKMRKAQERMRAGRPYATKVREIAAHLMQANPEYGHPYLVEREVKAVGVVLVTTDKGLCGGLNTNISRVTLSKLKEFEQRSIKVQATAFGNKGLGLLTRIGAKLVSQEVQLGDKPDLDRLLGAIKVQLDDYLEGRIDALYVATTRFVNTMRQEPVFLRLLPLSNGLDDPFQSGVETLAKTAEIKSDYSWDYIYEPDAKSVIDDLLQRYVEGLLYQAVAENMASEQSARMVAMKSASDNAKKVIGDLQLVYNKTRQAAITKEISEIVGGAAAV</sequence>
<feature type="chain" id="PRO_0000073246" description="ATP synthase gamma chain">
    <location>
        <begin position="1"/>
        <end position="301"/>
    </location>
</feature>
<name>ATPG_BORPA</name>
<proteinExistence type="inferred from homology"/>